<organism>
    <name type="scientific">Leptospira interrogans serogroup Icterohaemorrhagiae serovar Lai (strain 56601)</name>
    <dbReference type="NCBI Taxonomy" id="189518"/>
    <lineage>
        <taxon>Bacteria</taxon>
        <taxon>Pseudomonadati</taxon>
        <taxon>Spirochaetota</taxon>
        <taxon>Spirochaetia</taxon>
        <taxon>Leptospirales</taxon>
        <taxon>Leptospiraceae</taxon>
        <taxon>Leptospira</taxon>
    </lineage>
</organism>
<proteinExistence type="inferred from homology"/>
<name>FUMC_LEPIN</name>
<comment type="function">
    <text evidence="1">Involved in the TCA cycle. Catalyzes the stereospecific interconversion of fumarate to L-malate.</text>
</comment>
<comment type="catalytic activity">
    <reaction evidence="1">
        <text>(S)-malate = fumarate + H2O</text>
        <dbReference type="Rhea" id="RHEA:12460"/>
        <dbReference type="ChEBI" id="CHEBI:15377"/>
        <dbReference type="ChEBI" id="CHEBI:15589"/>
        <dbReference type="ChEBI" id="CHEBI:29806"/>
        <dbReference type="EC" id="4.2.1.2"/>
    </reaction>
</comment>
<comment type="pathway">
    <text evidence="1">Carbohydrate metabolism; tricarboxylic acid cycle; (S)-malate from fumarate: step 1/1.</text>
</comment>
<comment type="subunit">
    <text evidence="1">Homotetramer.</text>
</comment>
<comment type="subcellular location">
    <subcellularLocation>
        <location evidence="1">Cytoplasm</location>
    </subcellularLocation>
</comment>
<comment type="miscellaneous">
    <text evidence="1">There are 2 substrate-binding sites: the catalytic A site, and the non-catalytic B site that may play a role in the transfer of substrate or product between the active site and the solvent. Alternatively, the B site may bind allosteric effectors.</text>
</comment>
<comment type="similarity">
    <text evidence="1">Belongs to the class-II fumarase/aspartase family. Fumarase subfamily.</text>
</comment>
<dbReference type="EC" id="4.2.1.2" evidence="1"/>
<dbReference type="EMBL" id="AE010300">
    <property type="protein sequence ID" value="AAN47384.1"/>
    <property type="molecule type" value="Genomic_DNA"/>
</dbReference>
<dbReference type="EMBL" id="AB010203">
    <property type="protein sequence ID" value="BAA24376.1"/>
    <property type="molecule type" value="Genomic_DNA"/>
</dbReference>
<dbReference type="PIR" id="T00129">
    <property type="entry name" value="T00129"/>
</dbReference>
<dbReference type="RefSeq" id="NP_710366.1">
    <property type="nucleotide sequence ID" value="NC_004342.2"/>
</dbReference>
<dbReference type="RefSeq" id="WP_000857390.1">
    <property type="nucleotide sequence ID" value="NC_004342.2"/>
</dbReference>
<dbReference type="SMR" id="Q8F9L0"/>
<dbReference type="FunCoup" id="Q8F9L0">
    <property type="interactions" value="375"/>
</dbReference>
<dbReference type="STRING" id="189518.LA_0185"/>
<dbReference type="PaxDb" id="189518-LA_0185"/>
<dbReference type="EnsemblBacteria" id="AAN47384">
    <property type="protein sequence ID" value="AAN47384"/>
    <property type="gene ID" value="LA_0185"/>
</dbReference>
<dbReference type="GeneID" id="61143516"/>
<dbReference type="KEGG" id="lil:LA_0185"/>
<dbReference type="PATRIC" id="fig|189518.3.peg.184"/>
<dbReference type="HOGENOM" id="CLU_021594_4_1_12"/>
<dbReference type="InParanoid" id="Q8F9L0"/>
<dbReference type="OrthoDB" id="9802809at2"/>
<dbReference type="UniPathway" id="UPA00223">
    <property type="reaction ID" value="UER01007"/>
</dbReference>
<dbReference type="Proteomes" id="UP000001408">
    <property type="component" value="Chromosome I"/>
</dbReference>
<dbReference type="GO" id="GO:0005737">
    <property type="term" value="C:cytoplasm"/>
    <property type="evidence" value="ECO:0007669"/>
    <property type="project" value="UniProtKB-SubCell"/>
</dbReference>
<dbReference type="GO" id="GO:0004333">
    <property type="term" value="F:fumarate hydratase activity"/>
    <property type="evidence" value="ECO:0000318"/>
    <property type="project" value="GO_Central"/>
</dbReference>
<dbReference type="GO" id="GO:0006106">
    <property type="term" value="P:fumarate metabolic process"/>
    <property type="evidence" value="ECO:0000318"/>
    <property type="project" value="GO_Central"/>
</dbReference>
<dbReference type="GO" id="GO:0006108">
    <property type="term" value="P:malate metabolic process"/>
    <property type="evidence" value="ECO:0000318"/>
    <property type="project" value="GO_Central"/>
</dbReference>
<dbReference type="GO" id="GO:0006099">
    <property type="term" value="P:tricarboxylic acid cycle"/>
    <property type="evidence" value="ECO:0000318"/>
    <property type="project" value="GO_Central"/>
</dbReference>
<dbReference type="CDD" id="cd01362">
    <property type="entry name" value="Fumarase_classII"/>
    <property type="match status" value="1"/>
</dbReference>
<dbReference type="FunFam" id="1.10.40.30:FF:000002">
    <property type="entry name" value="Fumarate hydratase class II"/>
    <property type="match status" value="1"/>
</dbReference>
<dbReference type="FunFam" id="1.10.275.10:FF:000001">
    <property type="entry name" value="Fumarate hydratase, mitochondrial"/>
    <property type="match status" value="1"/>
</dbReference>
<dbReference type="FunFam" id="1.20.200.10:FF:000001">
    <property type="entry name" value="Fumarate hydratase, mitochondrial"/>
    <property type="match status" value="1"/>
</dbReference>
<dbReference type="Gene3D" id="1.10.40.30">
    <property type="entry name" value="Fumarase/aspartase (C-terminal domain)"/>
    <property type="match status" value="1"/>
</dbReference>
<dbReference type="Gene3D" id="1.20.200.10">
    <property type="entry name" value="Fumarase/aspartase (Central domain)"/>
    <property type="match status" value="1"/>
</dbReference>
<dbReference type="Gene3D" id="1.10.275.10">
    <property type="entry name" value="Fumarase/aspartase (N-terminal domain)"/>
    <property type="match status" value="1"/>
</dbReference>
<dbReference type="HAMAP" id="MF_00743">
    <property type="entry name" value="FumaraseC"/>
    <property type="match status" value="1"/>
</dbReference>
<dbReference type="InterPro" id="IPR005677">
    <property type="entry name" value="Fum_hydII"/>
</dbReference>
<dbReference type="InterPro" id="IPR024083">
    <property type="entry name" value="Fumarase/histidase_N"/>
</dbReference>
<dbReference type="InterPro" id="IPR018951">
    <property type="entry name" value="Fumarase_C_C"/>
</dbReference>
<dbReference type="InterPro" id="IPR020557">
    <property type="entry name" value="Fumarate_lyase_CS"/>
</dbReference>
<dbReference type="InterPro" id="IPR000362">
    <property type="entry name" value="Fumarate_lyase_fam"/>
</dbReference>
<dbReference type="InterPro" id="IPR022761">
    <property type="entry name" value="Fumarate_lyase_N"/>
</dbReference>
<dbReference type="InterPro" id="IPR008948">
    <property type="entry name" value="L-Aspartase-like"/>
</dbReference>
<dbReference type="NCBIfam" id="TIGR00979">
    <property type="entry name" value="fumC_II"/>
    <property type="match status" value="1"/>
</dbReference>
<dbReference type="NCBIfam" id="NF008909">
    <property type="entry name" value="PRK12273.1"/>
    <property type="match status" value="1"/>
</dbReference>
<dbReference type="PANTHER" id="PTHR11444">
    <property type="entry name" value="ASPARTATEAMMONIA/ARGININOSUCCINATE/ADENYLOSUCCINATE LYASE"/>
    <property type="match status" value="1"/>
</dbReference>
<dbReference type="PANTHER" id="PTHR11444:SF1">
    <property type="entry name" value="FUMARATE HYDRATASE, MITOCHONDRIAL"/>
    <property type="match status" value="1"/>
</dbReference>
<dbReference type="Pfam" id="PF10415">
    <property type="entry name" value="FumaraseC_C"/>
    <property type="match status" value="1"/>
</dbReference>
<dbReference type="Pfam" id="PF00206">
    <property type="entry name" value="Lyase_1"/>
    <property type="match status" value="1"/>
</dbReference>
<dbReference type="PRINTS" id="PR00145">
    <property type="entry name" value="ARGSUCLYASE"/>
</dbReference>
<dbReference type="PRINTS" id="PR00149">
    <property type="entry name" value="FUMRATELYASE"/>
</dbReference>
<dbReference type="SUPFAM" id="SSF48557">
    <property type="entry name" value="L-aspartase-like"/>
    <property type="match status" value="1"/>
</dbReference>
<dbReference type="PROSITE" id="PS00163">
    <property type="entry name" value="FUMARATE_LYASES"/>
    <property type="match status" value="1"/>
</dbReference>
<feature type="chain" id="PRO_0000161283" description="Fumarate hydratase class II">
    <location>
        <begin position="1"/>
        <end position="464"/>
    </location>
</feature>
<feature type="active site" description="Proton donor/acceptor" evidence="1">
    <location>
        <position position="187"/>
    </location>
</feature>
<feature type="active site" evidence="1">
    <location>
        <position position="317"/>
    </location>
</feature>
<feature type="binding site" evidence="1">
    <location>
        <begin position="97"/>
        <end position="99"/>
    </location>
    <ligand>
        <name>substrate</name>
    </ligand>
</feature>
<feature type="binding site" description="in site B" evidence="1">
    <location>
        <begin position="128"/>
        <end position="131"/>
    </location>
    <ligand>
        <name>substrate</name>
    </ligand>
</feature>
<feature type="binding site" evidence="1">
    <location>
        <begin position="138"/>
        <end position="140"/>
    </location>
    <ligand>
        <name>substrate</name>
    </ligand>
</feature>
<feature type="binding site" evidence="1">
    <location>
        <position position="186"/>
    </location>
    <ligand>
        <name>substrate</name>
    </ligand>
</feature>
<feature type="binding site" evidence="1">
    <location>
        <position position="318"/>
    </location>
    <ligand>
        <name>substrate</name>
    </ligand>
</feature>
<feature type="binding site" evidence="1">
    <location>
        <begin position="323"/>
        <end position="325"/>
    </location>
    <ligand>
        <name>substrate</name>
    </ligand>
</feature>
<feature type="site" description="Important for catalytic activity" evidence="1">
    <location>
        <position position="330"/>
    </location>
</feature>
<protein>
    <recommendedName>
        <fullName evidence="1">Fumarate hydratase class II</fullName>
        <shortName evidence="1">Fumarase C</shortName>
        <ecNumber evidence="1">4.2.1.2</ecNumber>
    </recommendedName>
    <alternativeName>
        <fullName evidence="1">Aerobic fumarase</fullName>
    </alternativeName>
    <alternativeName>
        <fullName evidence="1">Iron-independent fumarase</fullName>
    </alternativeName>
</protein>
<sequence>MKTRIETDSMGEIAVDDSKYWGAQTERSLHHFHIGNDRFPREMIRALGILKKSAAVVNAELGLLSEDKKKLIVQAADEVISGKLDEHFPLSVWQTGSGTQTNMNSNEVISNRAIEIAGGVKGSKKPIHPNDDVNKAQSSNDTFPTAMHIAAAEQLNQKLIPALIQLKETFKKKTDEFQNIIKIGRTHLQDATPLTLGQEFSGYVQQLEYNIARVKAVLPSVYRLALGGTAVGTGLNTHPQFAVKAAAQIAKETGLPFVSAENKFEALAAHDSLVETSGVLKTIAASLMKIANDIRWLSSGPRCGIGEISIPENEPGSSIMPGKVNPTQSEQMTMVAAQVIANDVAVNIGGASGNFELNVFKPLIIHNVLNSIRLLSDSCVSFEEHCARGIIPNKEKLNEHLNNSLMLVTALNPHIGYDNAAKIAKNAHKKGTTLKESGIELGLLTSEQFDQWVLPEKMIHPSVD</sequence>
<evidence type="ECO:0000255" key="1">
    <source>
        <dbReference type="HAMAP-Rule" id="MF_00743"/>
    </source>
</evidence>
<gene>
    <name evidence="1" type="primary">fumC</name>
    <name type="synonym">fum</name>
    <name type="ordered locus">LA_0185</name>
</gene>
<keyword id="KW-0963">Cytoplasm</keyword>
<keyword id="KW-0456">Lyase</keyword>
<keyword id="KW-1185">Reference proteome</keyword>
<keyword id="KW-0816">Tricarboxylic acid cycle</keyword>
<reference key="1">
    <citation type="journal article" date="2003" name="Nature">
        <title>Unique physiological and pathogenic features of Leptospira interrogans revealed by whole-genome sequencing.</title>
        <authorList>
            <person name="Ren S.-X."/>
            <person name="Fu G."/>
            <person name="Jiang X.-G."/>
            <person name="Zeng R."/>
            <person name="Miao Y.-G."/>
            <person name="Xu H."/>
            <person name="Zhang Y.-X."/>
            <person name="Xiong H."/>
            <person name="Lu G."/>
            <person name="Lu L.-F."/>
            <person name="Jiang H.-Q."/>
            <person name="Jia J."/>
            <person name="Tu Y.-F."/>
            <person name="Jiang J.-X."/>
            <person name="Gu W.-Y."/>
            <person name="Zhang Y.-Q."/>
            <person name="Cai Z."/>
            <person name="Sheng H.-H."/>
            <person name="Yin H.-F."/>
            <person name="Zhang Y."/>
            <person name="Zhu G.-F."/>
            <person name="Wan M."/>
            <person name="Huang H.-L."/>
            <person name="Qian Z."/>
            <person name="Wang S.-Y."/>
            <person name="Ma W."/>
            <person name="Yao Z.-J."/>
            <person name="Shen Y."/>
            <person name="Qiang B.-Q."/>
            <person name="Xia Q.-C."/>
            <person name="Guo X.-K."/>
            <person name="Danchin A."/>
            <person name="Saint Girons I."/>
            <person name="Somerville R.L."/>
            <person name="Wen Y.-M."/>
            <person name="Shi M.-H."/>
            <person name="Chen Z."/>
            <person name="Xu J.-G."/>
            <person name="Zhao G.-P."/>
        </authorList>
    </citation>
    <scope>NUCLEOTIDE SEQUENCE [LARGE SCALE GENOMIC DNA]</scope>
    <source>
        <strain>56601</strain>
    </source>
</reference>
<reference key="2">
    <citation type="journal article" date="1998" name="Gene">
        <title>Physical and genetic maps of the Leptospira interrogans serovar icterohaemorrhagiae strain Ictero No.1 chromosome and sequencing of a 19-kb region of the genome containing the 5S rRNA gene.</title>
        <authorList>
            <person name="Takahashi Y."/>
            <person name="Akase K."/>
            <person name="Hirano H."/>
            <person name="Fukunaga M."/>
        </authorList>
    </citation>
    <scope>NUCLEOTIDE SEQUENCE [GENOMIC DNA] OF 1-459</scope>
    <source>
        <strain>Ictero No.1 / Serogroup Icterohaemorrhagiae</strain>
    </source>
</reference>
<accession>Q8F9L0</accession>
<accession>O50640</accession>